<protein>
    <recommendedName>
        <fullName evidence="1">Vacuolar ATPase assembly integral membrane protein VMA21</fullName>
    </recommendedName>
</protein>
<organism>
    <name type="scientific">Coccidioides immitis (strain RS)</name>
    <name type="common">Valley fever fungus</name>
    <dbReference type="NCBI Taxonomy" id="246410"/>
    <lineage>
        <taxon>Eukaryota</taxon>
        <taxon>Fungi</taxon>
        <taxon>Dikarya</taxon>
        <taxon>Ascomycota</taxon>
        <taxon>Pezizomycotina</taxon>
        <taxon>Eurotiomycetes</taxon>
        <taxon>Eurotiomycetidae</taxon>
        <taxon>Onygenales</taxon>
        <taxon>Onygenaceae</taxon>
        <taxon>Coccidioides</taxon>
    </lineage>
</organism>
<feature type="chain" id="PRO_0000377585" description="Vacuolar ATPase assembly integral membrane protein VMA21">
    <location>
        <begin position="1"/>
        <end position="127"/>
    </location>
</feature>
<feature type="topological domain" description="Cytoplasmic" evidence="1">
    <location>
        <begin position="1"/>
        <end position="45"/>
    </location>
</feature>
<feature type="transmembrane region" description="Helical" evidence="1">
    <location>
        <begin position="46"/>
        <end position="66"/>
    </location>
</feature>
<feature type="topological domain" description="Lumenal" evidence="1">
    <location>
        <begin position="67"/>
        <end position="79"/>
    </location>
</feature>
<feature type="transmembrane region" description="Helical" evidence="1">
    <location>
        <begin position="80"/>
        <end position="100"/>
    </location>
</feature>
<feature type="topological domain" description="Cytoplasmic" evidence="1">
    <location>
        <begin position="101"/>
        <end position="127"/>
    </location>
</feature>
<feature type="region of interest" description="Disordered" evidence="2">
    <location>
        <begin position="1"/>
        <end position="28"/>
    </location>
</feature>
<feature type="region of interest" description="Disordered" evidence="2">
    <location>
        <begin position="107"/>
        <end position="127"/>
    </location>
</feature>
<feature type="short sequence motif" description="Prevents secretion from ER">
    <location>
        <begin position="124"/>
        <end position="127"/>
    </location>
</feature>
<feature type="compositionally biased region" description="Basic and acidic residues" evidence="2">
    <location>
        <begin position="118"/>
        <end position="127"/>
    </location>
</feature>
<name>VMA21_COCIM</name>
<dbReference type="EMBL" id="GG704913">
    <property type="protein sequence ID" value="EAS28888.1"/>
    <property type="molecule type" value="Genomic_DNA"/>
</dbReference>
<dbReference type="RefSeq" id="XP_001240471.1">
    <property type="nucleotide sequence ID" value="XM_001240470.1"/>
</dbReference>
<dbReference type="SMR" id="Q1DPX9"/>
<dbReference type="FunCoup" id="Q1DPX9">
    <property type="interactions" value="51"/>
</dbReference>
<dbReference type="STRING" id="246410.Q1DPX9"/>
<dbReference type="GeneID" id="4560234"/>
<dbReference type="KEGG" id="cim:CIMG_07634"/>
<dbReference type="VEuPathDB" id="FungiDB:CIMG_07634"/>
<dbReference type="InParanoid" id="Q1DPX9"/>
<dbReference type="OMA" id="AMKEDQT"/>
<dbReference type="OrthoDB" id="160405at2759"/>
<dbReference type="Proteomes" id="UP000001261">
    <property type="component" value="Unassembled WGS sequence"/>
</dbReference>
<dbReference type="GO" id="GO:0005789">
    <property type="term" value="C:endoplasmic reticulum membrane"/>
    <property type="evidence" value="ECO:0007669"/>
    <property type="project" value="UniProtKB-SubCell"/>
</dbReference>
<dbReference type="GO" id="GO:0033116">
    <property type="term" value="C:endoplasmic reticulum-Golgi intermediate compartment membrane"/>
    <property type="evidence" value="ECO:0007669"/>
    <property type="project" value="UniProtKB-SubCell"/>
</dbReference>
<dbReference type="GO" id="GO:0012507">
    <property type="term" value="C:ER to Golgi transport vesicle membrane"/>
    <property type="evidence" value="ECO:0007669"/>
    <property type="project" value="UniProtKB-SubCell"/>
</dbReference>
<dbReference type="GO" id="GO:0070072">
    <property type="term" value="P:vacuolar proton-transporting V-type ATPase complex assembly"/>
    <property type="evidence" value="ECO:0007669"/>
    <property type="project" value="UniProtKB-UniRule"/>
</dbReference>
<dbReference type="HAMAP" id="MF_03058">
    <property type="entry name" value="VMA21"/>
    <property type="match status" value="1"/>
</dbReference>
<dbReference type="InterPro" id="IPR019013">
    <property type="entry name" value="Vma21"/>
</dbReference>
<dbReference type="PANTHER" id="PTHR31792">
    <property type="entry name" value="VACUOLAR ATPASE ASSEMBLY INTEGRAL MEMBRANE PROTEIN VMA21"/>
    <property type="match status" value="1"/>
</dbReference>
<dbReference type="PANTHER" id="PTHR31792:SF3">
    <property type="entry name" value="VACUOLAR ATPASE ASSEMBLY INTEGRAL MEMBRANE PROTEIN VMA21"/>
    <property type="match status" value="1"/>
</dbReference>
<dbReference type="Pfam" id="PF09446">
    <property type="entry name" value="VMA21"/>
    <property type="match status" value="1"/>
</dbReference>
<comment type="function">
    <text evidence="1">Required for the assembly of the V0 complex of the vacuolar ATPase (V-ATPase) in the endoplasmic reticulum.</text>
</comment>
<comment type="subcellular location">
    <subcellularLocation>
        <location evidence="1">Endoplasmic reticulum membrane</location>
        <topology evidence="1">Multi-pass membrane protein</topology>
    </subcellularLocation>
    <subcellularLocation>
        <location evidence="1">Endoplasmic reticulum-Golgi intermediate compartment membrane</location>
        <topology evidence="1">Multi-pass membrane protein</topology>
    </subcellularLocation>
    <subcellularLocation>
        <location evidence="1">Cytoplasmic vesicle</location>
        <location evidence="1">COPII-coated vesicle membrane</location>
        <topology evidence="1">Multi-pass membrane protein</topology>
    </subcellularLocation>
</comment>
<comment type="similarity">
    <text evidence="1">Belongs to the VMA21 family.</text>
</comment>
<evidence type="ECO:0000255" key="1">
    <source>
        <dbReference type="HAMAP-Rule" id="MF_03058"/>
    </source>
</evidence>
<evidence type="ECO:0000256" key="2">
    <source>
        <dbReference type="SAM" id="MobiDB-lite"/>
    </source>
</evidence>
<reference key="1">
    <citation type="journal article" date="2009" name="Genome Res.">
        <title>Comparative genomic analyses of the human fungal pathogens Coccidioides and their relatives.</title>
        <authorList>
            <person name="Sharpton T.J."/>
            <person name="Stajich J.E."/>
            <person name="Rounsley S.D."/>
            <person name="Gardner M.J."/>
            <person name="Wortman J.R."/>
            <person name="Jordar V.S."/>
            <person name="Maiti R."/>
            <person name="Kodira C.D."/>
            <person name="Neafsey D.E."/>
            <person name="Zeng Q."/>
            <person name="Hung C.-Y."/>
            <person name="McMahan C."/>
            <person name="Muszewska A."/>
            <person name="Grynberg M."/>
            <person name="Mandel M.A."/>
            <person name="Kellner E.M."/>
            <person name="Barker B.M."/>
            <person name="Galgiani J.N."/>
            <person name="Orbach M.J."/>
            <person name="Kirkland T.N."/>
            <person name="Cole G.T."/>
            <person name="Henn M.R."/>
            <person name="Birren B.W."/>
            <person name="Taylor J.W."/>
        </authorList>
    </citation>
    <scope>NUCLEOTIDE SEQUENCE [LARGE SCALE GENOMIC DNA]</scope>
    <source>
        <strain>RS</strain>
    </source>
</reference>
<reference key="2">
    <citation type="journal article" date="2010" name="Genome Res.">
        <title>Population genomic sequencing of Coccidioides fungi reveals recent hybridization and transposon control.</title>
        <authorList>
            <person name="Neafsey D.E."/>
            <person name="Barker B.M."/>
            <person name="Sharpton T.J."/>
            <person name="Stajich J.E."/>
            <person name="Park D.J."/>
            <person name="Whiston E."/>
            <person name="Hung C.-Y."/>
            <person name="McMahan C."/>
            <person name="White J."/>
            <person name="Sykes S."/>
            <person name="Heiman D."/>
            <person name="Young S."/>
            <person name="Zeng Q."/>
            <person name="Abouelleil A."/>
            <person name="Aftuck L."/>
            <person name="Bessette D."/>
            <person name="Brown A."/>
            <person name="FitzGerald M."/>
            <person name="Lui A."/>
            <person name="Macdonald J.P."/>
            <person name="Priest M."/>
            <person name="Orbach M.J."/>
            <person name="Galgiani J.N."/>
            <person name="Kirkland T.N."/>
            <person name="Cole G.T."/>
            <person name="Birren B.W."/>
            <person name="Henn M.R."/>
            <person name="Taylor J.W."/>
            <person name="Rounsley S.D."/>
        </authorList>
    </citation>
    <scope>GENOME REANNOTATION</scope>
    <source>
        <strain>RS</strain>
    </source>
</reference>
<keyword id="KW-0968">Cytoplasmic vesicle</keyword>
<keyword id="KW-0256">Endoplasmic reticulum</keyword>
<keyword id="KW-0472">Membrane</keyword>
<keyword id="KW-1185">Reference proteome</keyword>
<keyword id="KW-0812">Transmembrane</keyword>
<keyword id="KW-1133">Transmembrane helix</keyword>
<sequence>MATRRNPTKESITTSPPPDQQPRQPGELEHREAIQLRDLPGYPQQVLWKLIIYSIAVLVLPLSAYFYSVNYVFDGNTTYAGATAAITANLILFSYIVVAMREDKGDQEQLREQQQLRGNKEETKKMK</sequence>
<accession>Q1DPX9</accession>
<accession>A0A0D6K9N0</accession>
<accession>J3K4G2</accession>
<proteinExistence type="inferred from homology"/>
<gene>
    <name evidence="1" type="primary">VMA21</name>
    <name type="ORF">CIMG_07634</name>
</gene>